<protein>
    <recommendedName>
        <fullName>Actin-1</fullName>
        <ecNumber evidence="1">3.6.4.-</ecNumber>
    </recommendedName>
</protein>
<feature type="chain" id="PRO_0000089031" description="Actin-1">
    <location>
        <begin position="1"/>
        <end position="375"/>
    </location>
</feature>
<organism>
    <name type="scientific">Suillus bovinus</name>
    <name type="common">Jersey cow bolete</name>
    <name type="synonym">Boletus bovinus</name>
    <dbReference type="NCBI Taxonomy" id="48563"/>
    <lineage>
        <taxon>Eukaryota</taxon>
        <taxon>Fungi</taxon>
        <taxon>Dikarya</taxon>
        <taxon>Basidiomycota</taxon>
        <taxon>Agaricomycotina</taxon>
        <taxon>Agaricomycetes</taxon>
        <taxon>Agaricomycetidae</taxon>
        <taxon>Boletales</taxon>
        <taxon>Suillineae</taxon>
        <taxon>Suillaceae</taxon>
        <taxon>Suillus</taxon>
    </lineage>
</organism>
<accession>Q9Y701</accession>
<evidence type="ECO:0000250" key="1">
    <source>
        <dbReference type="UniProtKB" id="P60010"/>
    </source>
</evidence>
<evidence type="ECO:0000305" key="2"/>
<keyword id="KW-0067">ATP-binding</keyword>
<keyword id="KW-0963">Cytoplasm</keyword>
<keyword id="KW-0206">Cytoskeleton</keyword>
<keyword id="KW-0378">Hydrolase</keyword>
<keyword id="KW-0547">Nucleotide-binding</keyword>
<sequence>MEEEVAALVIDNGSGMCKAGFAGDDAPRAVFPSIVGRPRHQGVMVGMGQKDSYVGDEAQSKRGILTLKYPIEHGIVTNWDDMEKIWHHTFYNELRVAPEEHPVLLTEAPLNPKANREKMTQIMFETFNAPAFYVAIQAVLSLYASGRTTGIVMDSGDGVTHTVPIYEGFALPHAILRLDLAGRDLTDHLIKNLIERGYSFTTTAEREIVRDIKEKLWYVALDFEQEIKTAGQSSALEKSCELPDGQVITIGNERFRAPEALFQPAFLGLEAAGIHETTYNSIFKCDLDIRRDLYANVVLSGGTTMFPGIADRMQKELTSLSPSSMKVKIVAPPERKYSVWIGGSILASLSTFQNLWCSKQEYDESGPGIVHRKCF</sequence>
<name>ACT1_SUIBO</name>
<proteinExistence type="evidence at transcript level"/>
<comment type="function">
    <text>Actins are highly conserved proteins that are involved in various types of cell motility and are ubiquitously expressed in all eukaryotic cells.</text>
</comment>
<comment type="catalytic activity">
    <reaction evidence="1">
        <text>ATP + H2O = ADP + phosphate + H(+)</text>
        <dbReference type="Rhea" id="RHEA:13065"/>
        <dbReference type="ChEBI" id="CHEBI:15377"/>
        <dbReference type="ChEBI" id="CHEBI:15378"/>
        <dbReference type="ChEBI" id="CHEBI:30616"/>
        <dbReference type="ChEBI" id="CHEBI:43474"/>
        <dbReference type="ChEBI" id="CHEBI:456216"/>
    </reaction>
</comment>
<comment type="subcellular location">
    <subcellularLocation>
        <location>Cytoplasm</location>
        <location>Cytoskeleton</location>
    </subcellularLocation>
</comment>
<comment type="similarity">
    <text evidence="2">Belongs to the actin family.</text>
</comment>
<dbReference type="EC" id="3.6.4.-" evidence="1"/>
<dbReference type="EMBL" id="AF155931">
    <property type="protein sequence ID" value="AAD38849.1"/>
    <property type="molecule type" value="Genomic_DNA"/>
</dbReference>
<dbReference type="EMBL" id="AF155930">
    <property type="protein sequence ID" value="AAD38199.1"/>
    <property type="molecule type" value="mRNA"/>
</dbReference>
<dbReference type="SMR" id="Q9Y701"/>
<dbReference type="GO" id="GO:0005737">
    <property type="term" value="C:cytoplasm"/>
    <property type="evidence" value="ECO:0007669"/>
    <property type="project" value="UniProtKB-KW"/>
</dbReference>
<dbReference type="GO" id="GO:0005856">
    <property type="term" value="C:cytoskeleton"/>
    <property type="evidence" value="ECO:0007669"/>
    <property type="project" value="UniProtKB-SubCell"/>
</dbReference>
<dbReference type="GO" id="GO:0005524">
    <property type="term" value="F:ATP binding"/>
    <property type="evidence" value="ECO:0007669"/>
    <property type="project" value="UniProtKB-KW"/>
</dbReference>
<dbReference type="GO" id="GO:0016787">
    <property type="term" value="F:hydrolase activity"/>
    <property type="evidence" value="ECO:0007669"/>
    <property type="project" value="UniProtKB-KW"/>
</dbReference>
<dbReference type="CDD" id="cd10224">
    <property type="entry name" value="ASKHA_NBD_actin"/>
    <property type="match status" value="1"/>
</dbReference>
<dbReference type="FunFam" id="2.30.36.70:FF:000001">
    <property type="entry name" value="Actin, alpha skeletal muscle"/>
    <property type="match status" value="1"/>
</dbReference>
<dbReference type="FunFam" id="3.30.420.40:FF:000291">
    <property type="entry name" value="Actin, alpha skeletal muscle"/>
    <property type="match status" value="1"/>
</dbReference>
<dbReference type="FunFam" id="3.90.640.10:FF:000001">
    <property type="entry name" value="Actin, muscle"/>
    <property type="match status" value="1"/>
</dbReference>
<dbReference type="FunFam" id="3.30.420.40:FF:000404">
    <property type="entry name" value="Major actin"/>
    <property type="match status" value="1"/>
</dbReference>
<dbReference type="FunFam" id="3.30.420.40:FF:000058">
    <property type="entry name" value="Putative actin-related protein 5"/>
    <property type="match status" value="1"/>
</dbReference>
<dbReference type="Gene3D" id="3.30.420.40">
    <property type="match status" value="2"/>
</dbReference>
<dbReference type="Gene3D" id="3.90.640.10">
    <property type="entry name" value="Actin, Chain A, domain 4"/>
    <property type="match status" value="1"/>
</dbReference>
<dbReference type="InterPro" id="IPR004000">
    <property type="entry name" value="Actin"/>
</dbReference>
<dbReference type="InterPro" id="IPR020902">
    <property type="entry name" value="Actin/actin-like_CS"/>
</dbReference>
<dbReference type="InterPro" id="IPR004001">
    <property type="entry name" value="Actin_CS"/>
</dbReference>
<dbReference type="InterPro" id="IPR043129">
    <property type="entry name" value="ATPase_NBD"/>
</dbReference>
<dbReference type="PANTHER" id="PTHR11937">
    <property type="entry name" value="ACTIN"/>
    <property type="match status" value="1"/>
</dbReference>
<dbReference type="Pfam" id="PF00022">
    <property type="entry name" value="Actin"/>
    <property type="match status" value="1"/>
</dbReference>
<dbReference type="PRINTS" id="PR00190">
    <property type="entry name" value="ACTIN"/>
</dbReference>
<dbReference type="SMART" id="SM00268">
    <property type="entry name" value="ACTIN"/>
    <property type="match status" value="1"/>
</dbReference>
<dbReference type="SUPFAM" id="SSF53067">
    <property type="entry name" value="Actin-like ATPase domain"/>
    <property type="match status" value="2"/>
</dbReference>
<dbReference type="PROSITE" id="PS00406">
    <property type="entry name" value="ACTINS_1"/>
    <property type="match status" value="1"/>
</dbReference>
<dbReference type="PROSITE" id="PS00432">
    <property type="entry name" value="ACTINS_2"/>
    <property type="match status" value="1"/>
</dbReference>
<dbReference type="PROSITE" id="PS01132">
    <property type="entry name" value="ACTINS_ACT_LIKE"/>
    <property type="match status" value="1"/>
</dbReference>
<gene>
    <name type="primary">ACT1</name>
</gene>
<reference key="1">
    <citation type="journal article" date="2000" name="Gene">
        <title>Molecular characterization of actin genes from homobasidiomycetes: two different actin genes from Schizophyllum commune and Suillus bovinus.</title>
        <authorList>
            <person name="Tarkka M.T."/>
            <person name="Vasara R."/>
            <person name="Gorfer M."/>
            <person name="Raudaskoski M."/>
        </authorList>
    </citation>
    <scope>NUCLEOTIDE SEQUENCE [GENOMIC DNA / MRNA]</scope>
    <source>
        <strain>Read-096</strain>
    </source>
</reference>